<dbReference type="EMBL" id="CP000730">
    <property type="protein sequence ID" value="ABX28949.1"/>
    <property type="molecule type" value="Genomic_DNA"/>
</dbReference>
<dbReference type="RefSeq" id="WP_000902817.1">
    <property type="nucleotide sequence ID" value="NC_010079.1"/>
</dbReference>
<dbReference type="SMR" id="A8Z075"/>
<dbReference type="KEGG" id="sax:USA300HOU_0928"/>
<dbReference type="HOGENOM" id="CLU_146641_2_0_9"/>
<dbReference type="BioCyc" id="SAUR451516-HMP:GTV5-946-MONOMER"/>
<dbReference type="GO" id="GO:0005886">
    <property type="term" value="C:plasma membrane"/>
    <property type="evidence" value="ECO:0007669"/>
    <property type="project" value="UniProtKB-SubCell"/>
</dbReference>
<dbReference type="HAMAP" id="MF_01536">
    <property type="entry name" value="UPF0344"/>
    <property type="match status" value="1"/>
</dbReference>
<dbReference type="InterPro" id="IPR010899">
    <property type="entry name" value="UPF0344"/>
</dbReference>
<dbReference type="NCBIfam" id="NF010195">
    <property type="entry name" value="PRK13673.1-2"/>
    <property type="match status" value="1"/>
</dbReference>
<dbReference type="NCBIfam" id="NF010199">
    <property type="entry name" value="PRK13673.1-6"/>
    <property type="match status" value="1"/>
</dbReference>
<dbReference type="Pfam" id="PF07457">
    <property type="entry name" value="DUF1516"/>
    <property type="match status" value="1"/>
</dbReference>
<feature type="chain" id="PRO_1000087606" description="UPF0344 protein USA300HOU_0928">
    <location>
        <begin position="1"/>
        <end position="129"/>
    </location>
</feature>
<feature type="transmembrane region" description="Helical" evidence="1">
    <location>
        <begin position="1"/>
        <end position="21"/>
    </location>
</feature>
<feature type="transmembrane region" description="Helical" evidence="1">
    <location>
        <begin position="36"/>
        <end position="56"/>
    </location>
</feature>
<feature type="transmembrane region" description="Helical" evidence="1">
    <location>
        <begin position="67"/>
        <end position="87"/>
    </location>
</feature>
<feature type="transmembrane region" description="Helical" evidence="1">
    <location>
        <begin position="99"/>
        <end position="119"/>
    </location>
</feature>
<sequence length="129" mass="14539">MLHLHILSWVLAIILFIATYLNISKNQGRSPFFKPLHMILRLFMLLTLISGFWILIQSFMNGGANHMLLTLKMLCGVAVVGLMEVSIAKRKRHEQSHTMFWITIALIIITMVLGVILPLGPISKLFGIG</sequence>
<keyword id="KW-1003">Cell membrane</keyword>
<keyword id="KW-0472">Membrane</keyword>
<keyword id="KW-0812">Transmembrane</keyword>
<keyword id="KW-1133">Transmembrane helix</keyword>
<proteinExistence type="inferred from homology"/>
<gene>
    <name type="ordered locus">USA300HOU_0928</name>
</gene>
<accession>A8Z075</accession>
<organism>
    <name type="scientific">Staphylococcus aureus (strain USA300 / TCH1516)</name>
    <dbReference type="NCBI Taxonomy" id="451516"/>
    <lineage>
        <taxon>Bacteria</taxon>
        <taxon>Bacillati</taxon>
        <taxon>Bacillota</taxon>
        <taxon>Bacilli</taxon>
        <taxon>Bacillales</taxon>
        <taxon>Staphylococcaceae</taxon>
        <taxon>Staphylococcus</taxon>
    </lineage>
</organism>
<name>Y928_STAAT</name>
<comment type="subcellular location">
    <subcellularLocation>
        <location evidence="1">Cell membrane</location>
        <topology evidence="1">Multi-pass membrane protein</topology>
    </subcellularLocation>
</comment>
<comment type="similarity">
    <text evidence="1">Belongs to the UPF0344 family.</text>
</comment>
<reference key="1">
    <citation type="journal article" date="2007" name="BMC Microbiol.">
        <title>Subtle genetic changes enhance virulence of methicillin resistant and sensitive Staphylococcus aureus.</title>
        <authorList>
            <person name="Highlander S.K."/>
            <person name="Hulten K.G."/>
            <person name="Qin X."/>
            <person name="Jiang H."/>
            <person name="Yerrapragada S."/>
            <person name="Mason E.O. Jr."/>
            <person name="Shang Y."/>
            <person name="Williams T.M."/>
            <person name="Fortunov R.M."/>
            <person name="Liu Y."/>
            <person name="Igboeli O."/>
            <person name="Petrosino J."/>
            <person name="Tirumalai M."/>
            <person name="Uzman A."/>
            <person name="Fox G.E."/>
            <person name="Cardenas A.M."/>
            <person name="Muzny D.M."/>
            <person name="Hemphill L."/>
            <person name="Ding Y."/>
            <person name="Dugan S."/>
            <person name="Blyth P.R."/>
            <person name="Buhay C.J."/>
            <person name="Dinh H.H."/>
            <person name="Hawes A.C."/>
            <person name="Holder M."/>
            <person name="Kovar C.L."/>
            <person name="Lee S.L."/>
            <person name="Liu W."/>
            <person name="Nazareth L.V."/>
            <person name="Wang Q."/>
            <person name="Zhou J."/>
            <person name="Kaplan S.L."/>
            <person name="Weinstock G.M."/>
        </authorList>
    </citation>
    <scope>NUCLEOTIDE SEQUENCE [LARGE SCALE GENOMIC DNA]</scope>
    <source>
        <strain>USA300 / TCH1516</strain>
    </source>
</reference>
<protein>
    <recommendedName>
        <fullName evidence="1">UPF0344 protein USA300HOU_0928</fullName>
    </recommendedName>
</protein>
<evidence type="ECO:0000255" key="1">
    <source>
        <dbReference type="HAMAP-Rule" id="MF_01536"/>
    </source>
</evidence>